<proteinExistence type="evidence at protein level"/>
<keyword id="KW-0002">3D-structure</keyword>
<keyword id="KW-0090">Biological rhythms</keyword>
<keyword id="KW-0963">Cytoplasm</keyword>
<keyword id="KW-0378">Hydrolase</keyword>
<keyword id="KW-0460">Magnesium</keyword>
<keyword id="KW-0479">Metal-binding</keyword>
<keyword id="KW-0496">Mitochondrion</keyword>
<keyword id="KW-0539">Nucleus</keyword>
<keyword id="KW-1267">Proteomics identification</keyword>
<keyword id="KW-1185">Reference proteome</keyword>
<keyword id="KW-0678">Repressor</keyword>
<keyword id="KW-0694">RNA-binding</keyword>
<keyword id="KW-0809">Transit peptide</keyword>
<sequence length="431" mass="48196">MFHSPRRLCSALLQRDAPGLRRLPAPGLRRPLSPPAAVPRPASPRLLAAASAASGAARSCSRTVCSMGTGTSRLYSALAKTLNSSAASQHPEYLVSPDPEHLEPIDPKELLEECRAVLHTRPPRFQRDFVDLRTDCPSTHPPIRVMQWNILAQALGEGKDNFVQCPVEALKWEERKCLILEEILAYQPDILCLQEVDHYFDTFQPLLSRLGYQGTFFPKPWSPCLDVEHNNGPDGCALFFLQNRFKLVNSANIRLTAMTLKTNQVAIAQTLECKESGRQFCIAVTHLKARTGWERFRSAQGCDLLQNLQNITQGAKIPLIVCGDFNAEPTEEVYKHFASSSLNLNSAYKLLSADGQSEPPYTTWKIRTSGECRHTLDYIWYSKHALNVRSALDLLTEEQIGPNRLPSFNYPSDHLSLVCDFSFTEESDGLS</sequence>
<evidence type="ECO:0000250" key="1">
    <source>
        <dbReference type="UniProtKB" id="O35710"/>
    </source>
</evidence>
<evidence type="ECO:0000255" key="2"/>
<evidence type="ECO:0000256" key="3">
    <source>
        <dbReference type="SAM" id="MobiDB-lite"/>
    </source>
</evidence>
<evidence type="ECO:0000269" key="4">
    <source>
    </source>
</evidence>
<evidence type="ECO:0000269" key="5">
    <source>
    </source>
</evidence>
<evidence type="ECO:0000269" key="6">
    <source>
    </source>
</evidence>
<evidence type="ECO:0000269" key="7">
    <source>
    </source>
</evidence>
<evidence type="ECO:0000305" key="8"/>
<evidence type="ECO:0000312" key="9">
    <source>
        <dbReference type="HGNC" id="HGNC:14254"/>
    </source>
</evidence>
<evidence type="ECO:0007744" key="10">
    <source>
        <dbReference type="PDB" id="6BT1"/>
    </source>
</evidence>
<evidence type="ECO:0007744" key="11">
    <source>
        <dbReference type="PDB" id="6BT2"/>
    </source>
</evidence>
<evidence type="ECO:0007744" key="12">
    <source>
        <dbReference type="PDB" id="6MAL"/>
    </source>
</evidence>
<evidence type="ECO:0007744" key="13">
    <source>
        <dbReference type="PDB" id="6NF0"/>
    </source>
</evidence>
<evidence type="ECO:0007829" key="14">
    <source>
        <dbReference type="PDB" id="6BT1"/>
    </source>
</evidence>
<evidence type="ECO:0007829" key="15">
    <source>
        <dbReference type="PDB" id="6BT2"/>
    </source>
</evidence>
<evidence type="ECO:0007829" key="16">
    <source>
        <dbReference type="PDB" id="6MAL"/>
    </source>
</evidence>
<comment type="function">
    <text evidence="1 5 7">Phosphatase which catalyzes the conversion of NADP(+) to NAD(+) and of NADPH to NADH (PubMed:31147539). Shows a small preference for NADPH over NADP(+) (PubMed:31147539). Represses translation and promotes degradation of target mRNA molecules (PubMed:29860338). Plays an important role in post-transcriptional regulation of metabolic genes under circadian control (By similarity). Exerts a rhythmic post-transcriptional control of genes necessary for metabolic functions including nutrient absorption, glucose/insulin sensitivity, lipid metabolism, adipogenesis, inflammation and osteogenesis (By similarity). Plays an important role in favoring adipogenesis over osteoblastogenesis and acts as a key regulator of the adipogenesis/osteogenesis balance (By similarity). Promotes adipogenesis by facilitating PPARG nuclear translocation which activates its transcriptional activity (By similarity). Regulates circadian expression of NOS2 in the liver and negatively regulates the circadian expression of IGF1 in the bone (By similarity). Critical for proper development of early embryos (By similarity).</text>
</comment>
<comment type="catalytic activity">
    <reaction evidence="7">
        <text>NADP(+) + H2O = phosphate + NAD(+)</text>
        <dbReference type="Rhea" id="RHEA:28050"/>
        <dbReference type="ChEBI" id="CHEBI:15377"/>
        <dbReference type="ChEBI" id="CHEBI:43474"/>
        <dbReference type="ChEBI" id="CHEBI:57540"/>
        <dbReference type="ChEBI" id="CHEBI:58349"/>
        <dbReference type="EC" id="3.1.3.108"/>
    </reaction>
    <physiologicalReaction direction="left-to-right" evidence="7">
        <dbReference type="Rhea" id="RHEA:28051"/>
    </physiologicalReaction>
</comment>
<comment type="catalytic activity">
    <reaction evidence="7">
        <text>NADPH + H2O = phosphate + NADH</text>
        <dbReference type="Rhea" id="RHEA:60664"/>
        <dbReference type="ChEBI" id="CHEBI:15377"/>
        <dbReference type="ChEBI" id="CHEBI:43474"/>
        <dbReference type="ChEBI" id="CHEBI:57783"/>
        <dbReference type="ChEBI" id="CHEBI:57945"/>
        <dbReference type="EC" id="3.1.3.108"/>
    </reaction>
    <physiologicalReaction direction="left-to-right" evidence="7">
        <dbReference type="Rhea" id="RHEA:60665"/>
    </physiologicalReaction>
</comment>
<comment type="cofactor">
    <cofactor evidence="5 6">
        <name>Mg(2+)</name>
        <dbReference type="ChEBI" id="CHEBI:18420"/>
    </cofactor>
    <text evidence="5">Binds 2 magnesium ions, but the ions are only loosely bound to the protein.</text>
</comment>
<comment type="biophysicochemical properties">
    <kinetics>
        <KM evidence="7">173 uM for NADPH</KM>
    </kinetics>
</comment>
<comment type="subunit">
    <text evidence="1">Interacts with PPARG.</text>
</comment>
<comment type="interaction">
    <interactant intactId="EBI-5655962">
        <id>Q9UK39</id>
    </interactant>
    <interactant intactId="EBI-372826">
        <id>Q8TEM1</id>
        <label>NUP210</label>
    </interactant>
    <organismsDiffer>false</organismsDiffer>
    <experiments>2</experiments>
</comment>
<comment type="subcellular location">
    <subcellularLocation>
        <location evidence="1">Cytoplasm</location>
    </subcellularLocation>
    <subcellularLocation>
        <location evidence="1">Nucleus</location>
    </subcellularLocation>
    <subcellularLocation>
        <location evidence="1">Cytoplasm</location>
        <location evidence="1">Perinuclear region</location>
    </subcellularLocation>
    <subcellularLocation>
        <location evidence="7">Mitochondrion</location>
    </subcellularLocation>
</comment>
<comment type="tissue specificity">
    <text evidence="4">Adipose tissue. Expression is higher in subcutaneous adipose tissue as compared to visceral adipose tissue.</text>
</comment>
<comment type="similarity">
    <text evidence="8">Belongs to the CCR4/nocturin family.</text>
</comment>
<comment type="caution">
    <text evidence="1 5 6 7">Was initially shown to have low deadenylase activity that was lost when the metal-binding Glu was mutated (By similarity). Later studies showed that the purified protein lacked deadenylase activity (PubMed:29860338, PubMed:30389976). Was subsequently shown to act as a phosphatase (PubMed:31147539).</text>
</comment>
<gene>
    <name evidence="9" type="primary">NOCT</name>
    <name type="synonym">CCR4</name>
    <name type="synonym">CCRN4L</name>
    <name type="synonym">NOC</name>
</gene>
<name>NOCT_HUMAN</name>
<dbReference type="EC" id="3.1.3.108" evidence="7"/>
<dbReference type="EMBL" id="AF183961">
    <property type="protein sequence ID" value="AAD56548.1"/>
    <property type="molecule type" value="mRNA"/>
</dbReference>
<dbReference type="EMBL" id="CH471056">
    <property type="protein sequence ID" value="EAX05129.1"/>
    <property type="molecule type" value="Genomic_DNA"/>
</dbReference>
<dbReference type="EMBL" id="CH471056">
    <property type="protein sequence ID" value="EAX05131.1"/>
    <property type="molecule type" value="Genomic_DNA"/>
</dbReference>
<dbReference type="EMBL" id="BC113494">
    <property type="protein sequence ID" value="AAI13495.1"/>
    <property type="molecule type" value="mRNA"/>
</dbReference>
<dbReference type="EMBL" id="BC113500">
    <property type="protein sequence ID" value="AAI13501.1"/>
    <property type="molecule type" value="mRNA"/>
</dbReference>
<dbReference type="EMBL" id="AF199492">
    <property type="protein sequence ID" value="AAG01387.1"/>
    <property type="molecule type" value="Genomic_DNA"/>
</dbReference>
<dbReference type="EMBL" id="AF199493">
    <property type="protein sequence ID" value="AAG01388.1"/>
    <property type="molecule type" value="mRNA"/>
</dbReference>
<dbReference type="EMBL" id="AF199494">
    <property type="protein sequence ID" value="AAG01389.1"/>
    <property type="molecule type" value="Transcribed_RNA"/>
</dbReference>
<dbReference type="CCDS" id="CCDS3743.1"/>
<dbReference type="RefSeq" id="NP_036250.2">
    <property type="nucleotide sequence ID" value="NM_012118.3"/>
</dbReference>
<dbReference type="PDB" id="6BT1">
    <property type="method" value="X-ray"/>
    <property type="resolution" value="1.48 A"/>
    <property type="chains" value="A=120-431"/>
</dbReference>
<dbReference type="PDB" id="6BT2">
    <property type="method" value="X-ray"/>
    <property type="resolution" value="2.41 A"/>
    <property type="chains" value="A/B=120-431"/>
</dbReference>
<dbReference type="PDB" id="6MAL">
    <property type="method" value="X-ray"/>
    <property type="resolution" value="2.60 A"/>
    <property type="chains" value="A=122-431"/>
</dbReference>
<dbReference type="PDB" id="6NF0">
    <property type="method" value="X-ray"/>
    <property type="resolution" value="2.70 A"/>
    <property type="chains" value="A=122-431"/>
</dbReference>
<dbReference type="PDBsum" id="6BT1"/>
<dbReference type="PDBsum" id="6BT2"/>
<dbReference type="PDBsum" id="6MAL"/>
<dbReference type="PDBsum" id="6NF0"/>
<dbReference type="SASBDB" id="Q9UK39"/>
<dbReference type="SMR" id="Q9UK39"/>
<dbReference type="BioGRID" id="117347">
    <property type="interactions" value="74"/>
</dbReference>
<dbReference type="FunCoup" id="Q9UK39">
    <property type="interactions" value="2186"/>
</dbReference>
<dbReference type="IntAct" id="Q9UK39">
    <property type="interactions" value="47"/>
</dbReference>
<dbReference type="STRING" id="9606.ENSP00000280614"/>
<dbReference type="iPTMnet" id="Q9UK39"/>
<dbReference type="PhosphoSitePlus" id="Q9UK39"/>
<dbReference type="BioMuta" id="NOCT"/>
<dbReference type="DMDM" id="212276446"/>
<dbReference type="jPOST" id="Q9UK39"/>
<dbReference type="MassIVE" id="Q9UK39"/>
<dbReference type="PaxDb" id="9606-ENSP00000280614"/>
<dbReference type="PeptideAtlas" id="Q9UK39"/>
<dbReference type="ProteomicsDB" id="84714"/>
<dbReference type="Pumba" id="Q9UK39"/>
<dbReference type="Antibodypedia" id="16153">
    <property type="antibodies" value="125 antibodies from 30 providers"/>
</dbReference>
<dbReference type="DNASU" id="25819"/>
<dbReference type="Ensembl" id="ENST00000280614.4">
    <property type="protein sequence ID" value="ENSP00000280614.2"/>
    <property type="gene ID" value="ENSG00000151014.6"/>
</dbReference>
<dbReference type="GeneID" id="25819"/>
<dbReference type="KEGG" id="hsa:25819"/>
<dbReference type="MANE-Select" id="ENST00000280614.4">
    <property type="protein sequence ID" value="ENSP00000280614.2"/>
    <property type="RefSeq nucleotide sequence ID" value="NM_012118.4"/>
    <property type="RefSeq protein sequence ID" value="NP_036250.2"/>
</dbReference>
<dbReference type="UCSC" id="uc003ihl.5">
    <property type="organism name" value="human"/>
</dbReference>
<dbReference type="AGR" id="HGNC:14254"/>
<dbReference type="CTD" id="25819"/>
<dbReference type="DisGeNET" id="25819"/>
<dbReference type="GeneCards" id="NOCT"/>
<dbReference type="HGNC" id="HGNC:14254">
    <property type="gene designation" value="NOCT"/>
</dbReference>
<dbReference type="HPA" id="ENSG00000151014">
    <property type="expression patterns" value="Tissue enhanced (bone)"/>
</dbReference>
<dbReference type="MIM" id="608468">
    <property type="type" value="gene"/>
</dbReference>
<dbReference type="neXtProt" id="NX_Q9UK39"/>
<dbReference type="OpenTargets" id="ENSG00000151014"/>
<dbReference type="PharmGKB" id="PA26176"/>
<dbReference type="VEuPathDB" id="HostDB:ENSG00000151014"/>
<dbReference type="eggNOG" id="KOG0620">
    <property type="taxonomic scope" value="Eukaryota"/>
</dbReference>
<dbReference type="GeneTree" id="ENSGT00940000155249"/>
<dbReference type="HOGENOM" id="CLU_016428_1_2_1"/>
<dbReference type="InParanoid" id="Q9UK39"/>
<dbReference type="OMA" id="RAACSMG"/>
<dbReference type="OrthoDB" id="276515at2759"/>
<dbReference type="PAN-GO" id="Q9UK39">
    <property type="GO annotations" value="1 GO annotation based on evolutionary models"/>
</dbReference>
<dbReference type="PhylomeDB" id="Q9UK39"/>
<dbReference type="TreeFam" id="TF323175"/>
<dbReference type="BioCyc" id="MetaCyc:ENSG00000151014-MONOMER"/>
<dbReference type="BRENDA" id="3.1.3.108">
    <property type="organism ID" value="2681"/>
</dbReference>
<dbReference type="PathwayCommons" id="Q9UK39"/>
<dbReference type="Reactome" id="R-HSA-1368108">
    <property type="pathway name" value="BMAL1:CLOCK,NPAS2 activates circadian gene expression"/>
</dbReference>
<dbReference type="SignaLink" id="Q9UK39"/>
<dbReference type="BioGRID-ORCS" id="25819">
    <property type="hits" value="19 hits in 1140 CRISPR screens"/>
</dbReference>
<dbReference type="ChiTaRS" id="NOCT">
    <property type="organism name" value="human"/>
</dbReference>
<dbReference type="GenomeRNAi" id="25819"/>
<dbReference type="Pharos" id="Q9UK39">
    <property type="development level" value="Tbio"/>
</dbReference>
<dbReference type="PRO" id="PR:Q9UK39"/>
<dbReference type="Proteomes" id="UP000005640">
    <property type="component" value="Chromosome 4"/>
</dbReference>
<dbReference type="RNAct" id="Q9UK39">
    <property type="molecule type" value="protein"/>
</dbReference>
<dbReference type="Bgee" id="ENSG00000151014">
    <property type="expression patterns" value="Expressed in buccal mucosa cell and 117 other cell types or tissues"/>
</dbReference>
<dbReference type="ExpressionAtlas" id="Q9UK39">
    <property type="expression patterns" value="baseline and differential"/>
</dbReference>
<dbReference type="GO" id="GO:0005737">
    <property type="term" value="C:cytoplasm"/>
    <property type="evidence" value="ECO:0000250"/>
    <property type="project" value="UniProtKB"/>
</dbReference>
<dbReference type="GO" id="GO:0005739">
    <property type="term" value="C:mitochondrion"/>
    <property type="evidence" value="ECO:0000314"/>
    <property type="project" value="UniProtKB"/>
</dbReference>
<dbReference type="GO" id="GO:0005654">
    <property type="term" value="C:nucleoplasm"/>
    <property type="evidence" value="ECO:0000304"/>
    <property type="project" value="Reactome"/>
</dbReference>
<dbReference type="GO" id="GO:0005634">
    <property type="term" value="C:nucleus"/>
    <property type="evidence" value="ECO:0000250"/>
    <property type="project" value="UniProtKB"/>
</dbReference>
<dbReference type="GO" id="GO:0000932">
    <property type="term" value="C:P-body"/>
    <property type="evidence" value="ECO:0007669"/>
    <property type="project" value="Ensembl"/>
</dbReference>
<dbReference type="GO" id="GO:0048471">
    <property type="term" value="C:perinuclear region of cytoplasm"/>
    <property type="evidence" value="ECO:0000250"/>
    <property type="project" value="UniProtKB"/>
</dbReference>
<dbReference type="GO" id="GO:0000175">
    <property type="term" value="F:3'-5'-RNA exonuclease activity"/>
    <property type="evidence" value="ECO:0000318"/>
    <property type="project" value="GO_Central"/>
</dbReference>
<dbReference type="GO" id="GO:0046872">
    <property type="term" value="F:metal ion binding"/>
    <property type="evidence" value="ECO:0007669"/>
    <property type="project" value="UniProtKB-KW"/>
</dbReference>
<dbReference type="GO" id="GO:0003729">
    <property type="term" value="F:mRNA binding"/>
    <property type="evidence" value="ECO:0000250"/>
    <property type="project" value="UniProtKB"/>
</dbReference>
<dbReference type="GO" id="GO:0019178">
    <property type="term" value="F:NADP phosphatase activity"/>
    <property type="evidence" value="ECO:0000314"/>
    <property type="project" value="UniProtKB"/>
</dbReference>
<dbReference type="GO" id="GO:0102757">
    <property type="term" value="F:NADPH phosphatase activity"/>
    <property type="evidence" value="ECO:0000314"/>
    <property type="project" value="UniProtKB"/>
</dbReference>
<dbReference type="GO" id="GO:0004535">
    <property type="term" value="F:poly(A)-specific ribonuclease activity"/>
    <property type="evidence" value="ECO:0000250"/>
    <property type="project" value="UniProtKB"/>
</dbReference>
<dbReference type="GO" id="GO:0032922">
    <property type="term" value="P:circadian regulation of gene expression"/>
    <property type="evidence" value="ECO:0000250"/>
    <property type="project" value="UniProtKB"/>
</dbReference>
<dbReference type="GO" id="GO:0000290">
    <property type="term" value="P:deadenylation-dependent decapping of nuclear-transcribed mRNA"/>
    <property type="evidence" value="ECO:0007669"/>
    <property type="project" value="Ensembl"/>
</dbReference>
<dbReference type="GO" id="GO:0048255">
    <property type="term" value="P:mRNA stabilization"/>
    <property type="evidence" value="ECO:0000250"/>
    <property type="project" value="UniProtKB"/>
</dbReference>
<dbReference type="GO" id="GO:0006739">
    <property type="term" value="P:NADP metabolic process"/>
    <property type="evidence" value="ECO:0000314"/>
    <property type="project" value="UniProtKB"/>
</dbReference>
<dbReference type="GO" id="GO:0010629">
    <property type="term" value="P:negative regulation of gene expression"/>
    <property type="evidence" value="ECO:0000250"/>
    <property type="project" value="UniProtKB"/>
</dbReference>
<dbReference type="GO" id="GO:0045668">
    <property type="term" value="P:negative regulation of osteoblast differentiation"/>
    <property type="evidence" value="ECO:0000250"/>
    <property type="project" value="UniProtKB"/>
</dbReference>
<dbReference type="GO" id="GO:0033962">
    <property type="term" value="P:P-body assembly"/>
    <property type="evidence" value="ECO:0007669"/>
    <property type="project" value="Ensembl"/>
</dbReference>
<dbReference type="GO" id="GO:0045600">
    <property type="term" value="P:positive regulation of fat cell differentiation"/>
    <property type="evidence" value="ECO:0000250"/>
    <property type="project" value="UniProtKB"/>
</dbReference>
<dbReference type="GO" id="GO:0042752">
    <property type="term" value="P:regulation of circadian rhythm"/>
    <property type="evidence" value="ECO:0000250"/>
    <property type="project" value="UniProtKB"/>
</dbReference>
<dbReference type="GO" id="GO:0045995">
    <property type="term" value="P:regulation of embryonic development"/>
    <property type="evidence" value="ECO:0007669"/>
    <property type="project" value="Ensembl"/>
</dbReference>
<dbReference type="GO" id="GO:0032496">
    <property type="term" value="P:response to lipopolysaccharide"/>
    <property type="evidence" value="ECO:0000250"/>
    <property type="project" value="UniProtKB"/>
</dbReference>
<dbReference type="GO" id="GO:0006366">
    <property type="term" value="P:transcription by RNA polymerase II"/>
    <property type="evidence" value="ECO:0000304"/>
    <property type="project" value="ProtInc"/>
</dbReference>
<dbReference type="CDD" id="cd09096">
    <property type="entry name" value="Deadenylase_nocturnin"/>
    <property type="match status" value="1"/>
</dbReference>
<dbReference type="FunFam" id="3.60.10.10:FF:000012">
    <property type="entry name" value="nocturnin isoform X2"/>
    <property type="match status" value="1"/>
</dbReference>
<dbReference type="Gene3D" id="3.60.10.10">
    <property type="entry name" value="Endonuclease/exonuclease/phosphatase"/>
    <property type="match status" value="1"/>
</dbReference>
<dbReference type="InterPro" id="IPR050410">
    <property type="entry name" value="CCR4/nocturin_mRNA_transcr"/>
</dbReference>
<dbReference type="InterPro" id="IPR034965">
    <property type="entry name" value="Deadenylase_nocturnin"/>
</dbReference>
<dbReference type="InterPro" id="IPR036691">
    <property type="entry name" value="Endo/exonu/phosph_ase_sf"/>
</dbReference>
<dbReference type="InterPro" id="IPR005135">
    <property type="entry name" value="Endo/exonuclease/phosphatase"/>
</dbReference>
<dbReference type="PANTHER" id="PTHR12121">
    <property type="entry name" value="CARBON CATABOLITE REPRESSOR PROTEIN 4"/>
    <property type="match status" value="1"/>
</dbReference>
<dbReference type="PANTHER" id="PTHR12121:SF45">
    <property type="entry name" value="NOCTURNIN"/>
    <property type="match status" value="1"/>
</dbReference>
<dbReference type="Pfam" id="PF03372">
    <property type="entry name" value="Exo_endo_phos"/>
    <property type="match status" value="1"/>
</dbReference>
<dbReference type="SUPFAM" id="SSF56219">
    <property type="entry name" value="DNase I-like"/>
    <property type="match status" value="1"/>
</dbReference>
<feature type="transit peptide" description="Mitochondrion" evidence="2">
    <location>
        <begin position="1"/>
        <end position="75"/>
    </location>
</feature>
<feature type="chain" id="PRO_0000218568" description="Nocturnin" evidence="2">
    <location>
        <begin position="76"/>
        <end position="431"/>
    </location>
</feature>
<feature type="region of interest" description="Disordered" evidence="3">
    <location>
        <begin position="20"/>
        <end position="41"/>
    </location>
</feature>
<feature type="region of interest" description="Interaction with PPARG" evidence="1">
    <location>
        <begin position="343"/>
        <end position="353"/>
    </location>
</feature>
<feature type="compositionally biased region" description="Low complexity" evidence="3">
    <location>
        <begin position="20"/>
        <end position="31"/>
    </location>
</feature>
<feature type="compositionally biased region" description="Pro residues" evidence="3">
    <location>
        <begin position="32"/>
        <end position="41"/>
    </location>
</feature>
<feature type="binding site" evidence="5 6 7 10 11 12 13">
    <location>
        <position position="195"/>
    </location>
    <ligand>
        <name>Mg(2+)</name>
        <dbReference type="ChEBI" id="CHEBI:18420"/>
    </ligand>
</feature>
<feature type="binding site" evidence="7">
    <location>
        <position position="195"/>
    </location>
    <ligand>
        <name>substrate</name>
    </ligand>
</feature>
<feature type="binding site" evidence="7">
    <location>
        <begin position="219"/>
        <end position="221"/>
    </location>
    <ligand>
        <name>substrate</name>
    </ligand>
</feature>
<feature type="binding site" evidence="7">
    <location>
        <position position="263"/>
    </location>
    <ligand>
        <name>substrate</name>
    </ligand>
</feature>
<feature type="binding site" evidence="7">
    <location>
        <begin position="286"/>
        <end position="289"/>
    </location>
    <ligand>
        <name>substrate</name>
    </ligand>
</feature>
<feature type="binding site" evidence="7">
    <location>
        <begin position="324"/>
        <end position="326"/>
    </location>
    <ligand>
        <name>substrate</name>
    </ligand>
</feature>
<feature type="binding site" evidence="7">
    <location>
        <position position="414"/>
    </location>
    <ligand>
        <name>substrate</name>
    </ligand>
</feature>
<feature type="sequence variant" id="VAR_047096" description="In dbSNP:rs2271777.">
    <original>H</original>
    <variation>Y</variation>
    <location>
        <position position="140"/>
    </location>
</feature>
<feature type="mutagenesis site" description="Slightly decreased activity as transcriptional repressor." evidence="5">
    <original>N</original>
    <variation>A</variation>
    <location>
        <position position="149"/>
    </location>
</feature>
<feature type="mutagenesis site" description="Lack of catalytic activity." evidence="7">
    <original>D</original>
    <variation>A</variation>
    <location>
        <position position="160"/>
    </location>
</feature>
<feature type="mutagenesis site" description="Slightly increased activity as transcriptional repressor. Lack of catalytic activity." evidence="5 7">
    <original>E</original>
    <variation>A</variation>
    <location>
        <position position="195"/>
    </location>
</feature>
<feature type="mutagenesis site" description="Reduced catalytic activity." evidence="7">
    <original>K</original>
    <variation>A</variation>
    <location>
        <position position="219"/>
    </location>
</feature>
<feature type="mutagenesis site" description="No effect on activity as transcriptional repressor." evidence="5">
    <original>H</original>
    <variation>A</variation>
    <location>
        <position position="286"/>
    </location>
</feature>
<feature type="mutagenesis site" description="Lack of catalytic activity." evidence="7">
    <original>H</original>
    <variation>N</variation>
    <location>
        <position position="286"/>
    </location>
</feature>
<feature type="mutagenesis site" description="Reduced catalytic activity." evidence="7">
    <original>K</original>
    <variation>A</variation>
    <location>
        <position position="288"/>
    </location>
</feature>
<feature type="mutagenesis site" description="Lack of catalytic activity." evidence="7">
    <original>R</original>
    <variation>A</variation>
    <location>
        <position position="290"/>
    </location>
</feature>
<feature type="mutagenesis site" description="No effect on activity as transcriptional repressor." evidence="5">
    <original>D</original>
    <variation>A</variation>
    <location>
        <position position="324"/>
    </location>
</feature>
<feature type="mutagenesis site" description="No effect on activity as transcriptional repressor." evidence="5">
    <original>N</original>
    <variation>A</variation>
    <location>
        <position position="326"/>
    </location>
</feature>
<feature type="mutagenesis site" description="No effect on catalytic activity." evidence="7">
    <original>K</original>
    <variation>A</variation>
    <location>
        <position position="365"/>
    </location>
</feature>
<feature type="mutagenesis site" description="Reduced catalytic activity." evidence="7">
    <original>R</original>
    <variation>A</variation>
    <location>
        <position position="367"/>
    </location>
</feature>
<feature type="mutagenesis site" description="Slightly decreased activity as transcriptional repressor." evidence="5">
    <original>D</original>
    <variation>A</variation>
    <location>
        <position position="377"/>
    </location>
</feature>
<feature type="mutagenesis site" description="Decreased activity as transcriptional repressor." evidence="5">
    <original>H</original>
    <variation>A</variation>
    <variation>N</variation>
    <location>
        <position position="414"/>
    </location>
</feature>
<feature type="sequence conflict" description="In Ref. 1; AAD56548." evidence="8" ref="1">
    <original>D</original>
    <variation>G</variation>
    <location>
        <position position="16"/>
    </location>
</feature>
<feature type="sequence conflict" description="In Ref. 4; AAG01387." evidence="8" ref="4">
    <original>T</original>
    <variation>N</variation>
    <location>
        <position position="69"/>
    </location>
</feature>
<feature type="sequence conflict" description="In Ref. 1; AAD56548." evidence="8" ref="1">
    <original>A</original>
    <variation>G</variation>
    <location>
        <position position="77"/>
    </location>
</feature>
<feature type="sequence conflict" description="In Ref. 4; AAG01389." evidence="8" ref="4">
    <original>A</original>
    <variation>T</variation>
    <location>
        <position position="266"/>
    </location>
</feature>
<feature type="sequence conflict" description="In Ref. 1; AAD56548." evidence="8" ref="1">
    <original>S</original>
    <variation>N</variation>
    <location>
        <position position="341"/>
    </location>
</feature>
<feature type="helix" evidence="14">
    <location>
        <begin position="123"/>
        <end position="125"/>
    </location>
</feature>
<feature type="strand" evidence="14">
    <location>
        <begin position="129"/>
        <end position="131"/>
    </location>
</feature>
<feature type="strand" evidence="14">
    <location>
        <begin position="143"/>
        <end position="149"/>
    </location>
</feature>
<feature type="helix" evidence="14">
    <location>
        <begin position="153"/>
        <end position="158"/>
    </location>
</feature>
<feature type="strand" evidence="16">
    <location>
        <begin position="163"/>
        <end position="165"/>
    </location>
</feature>
<feature type="helix" evidence="14">
    <location>
        <begin position="167"/>
        <end position="170"/>
    </location>
</feature>
<feature type="helix" evidence="14">
    <location>
        <begin position="172"/>
        <end position="186"/>
    </location>
</feature>
<feature type="strand" evidence="14">
    <location>
        <begin position="189"/>
        <end position="195"/>
    </location>
</feature>
<feature type="turn" evidence="14">
    <location>
        <begin position="199"/>
        <end position="202"/>
    </location>
</feature>
<feature type="helix" evidence="14">
    <location>
        <begin position="203"/>
        <end position="209"/>
    </location>
</feature>
<feature type="strand" evidence="14">
    <location>
        <begin position="212"/>
        <end position="218"/>
    </location>
</feature>
<feature type="helix" evidence="14">
    <location>
        <begin position="223"/>
        <end position="226"/>
    </location>
</feature>
<feature type="strand" evidence="14">
    <location>
        <begin position="235"/>
        <end position="241"/>
    </location>
</feature>
<feature type="turn" evidence="14">
    <location>
        <begin position="242"/>
        <end position="244"/>
    </location>
</feature>
<feature type="strand" evidence="14">
    <location>
        <begin position="245"/>
        <end position="257"/>
    </location>
</feature>
<feature type="strand" evidence="14">
    <location>
        <begin position="260"/>
        <end position="273"/>
    </location>
</feature>
<feature type="turn" evidence="14">
    <location>
        <begin position="274"/>
        <end position="276"/>
    </location>
</feature>
<feature type="strand" evidence="14">
    <location>
        <begin position="279"/>
        <end position="286"/>
    </location>
</feature>
<feature type="helix" evidence="14">
    <location>
        <begin position="294"/>
        <end position="311"/>
    </location>
</feature>
<feature type="turn" evidence="14">
    <location>
        <begin position="312"/>
        <end position="316"/>
    </location>
</feature>
<feature type="strand" evidence="14">
    <location>
        <begin position="319"/>
        <end position="324"/>
    </location>
</feature>
<feature type="helix" evidence="14">
    <location>
        <begin position="332"/>
        <end position="339"/>
    </location>
</feature>
<feature type="strand" evidence="14">
    <location>
        <begin position="344"/>
        <end position="346"/>
    </location>
</feature>
<feature type="helix" evidence="14">
    <location>
        <begin position="347"/>
        <end position="351"/>
    </location>
</feature>
<feature type="strand" evidence="14">
    <location>
        <begin position="352"/>
        <end position="355"/>
    </location>
</feature>
<feature type="strand" evidence="14">
    <location>
        <begin position="362"/>
        <end position="367"/>
    </location>
</feature>
<feature type="strand" evidence="14">
    <location>
        <begin position="370"/>
        <end position="374"/>
    </location>
</feature>
<feature type="strand" evidence="14">
    <location>
        <begin position="377"/>
        <end position="382"/>
    </location>
</feature>
<feature type="turn" evidence="14">
    <location>
        <begin position="383"/>
        <end position="385"/>
    </location>
</feature>
<feature type="strand" evidence="14">
    <location>
        <begin position="386"/>
        <end position="392"/>
    </location>
</feature>
<feature type="helix" evidence="14">
    <location>
        <begin position="397"/>
        <end position="400"/>
    </location>
</feature>
<feature type="strand" evidence="14">
    <location>
        <begin position="405"/>
        <end position="407"/>
    </location>
</feature>
<feature type="strand" evidence="15">
    <location>
        <begin position="411"/>
        <end position="414"/>
    </location>
</feature>
<feature type="strand" evidence="14">
    <location>
        <begin position="417"/>
        <end position="423"/>
    </location>
</feature>
<reference key="1">
    <citation type="journal article" date="1999" name="J. Biol. Chem.">
        <title>Characterization of a mammalian gene related to the yeast CCR4 general transcription factor and revealed by transposon insertion.</title>
        <authorList>
            <person name="Dupressoir A."/>
            <person name="Barbot W."/>
            <person name="Loireau M.-P."/>
            <person name="Heidmann T."/>
        </authorList>
    </citation>
    <scope>NUCLEOTIDE SEQUENCE [MRNA]</scope>
</reference>
<reference key="2">
    <citation type="submission" date="2005-09" db="EMBL/GenBank/DDBJ databases">
        <authorList>
            <person name="Mural R.J."/>
            <person name="Istrail S."/>
            <person name="Sutton G.G."/>
            <person name="Florea L."/>
            <person name="Halpern A.L."/>
            <person name="Mobarry C.M."/>
            <person name="Lippert R."/>
            <person name="Walenz B."/>
            <person name="Shatkay H."/>
            <person name="Dew I."/>
            <person name="Miller J.R."/>
            <person name="Flanigan M.J."/>
            <person name="Edwards N.J."/>
            <person name="Bolanos R."/>
            <person name="Fasulo D."/>
            <person name="Halldorsson B.V."/>
            <person name="Hannenhalli S."/>
            <person name="Turner R."/>
            <person name="Yooseph S."/>
            <person name="Lu F."/>
            <person name="Nusskern D.R."/>
            <person name="Shue B.C."/>
            <person name="Zheng X.H."/>
            <person name="Zhong F."/>
            <person name="Delcher A.L."/>
            <person name="Huson D.H."/>
            <person name="Kravitz S.A."/>
            <person name="Mouchard L."/>
            <person name="Reinert K."/>
            <person name="Remington K.A."/>
            <person name="Clark A.G."/>
            <person name="Waterman M.S."/>
            <person name="Eichler E.E."/>
            <person name="Adams M.D."/>
            <person name="Hunkapiller M.W."/>
            <person name="Myers E.W."/>
            <person name="Venter J.C."/>
        </authorList>
    </citation>
    <scope>NUCLEOTIDE SEQUENCE [LARGE SCALE GENOMIC DNA]</scope>
</reference>
<reference key="3">
    <citation type="journal article" date="2004" name="Genome Res.">
        <title>The status, quality, and expansion of the NIH full-length cDNA project: the Mammalian Gene Collection (MGC).</title>
        <authorList>
            <consortium name="The MGC Project Team"/>
        </authorList>
    </citation>
    <scope>NUCLEOTIDE SEQUENCE [LARGE SCALE MRNA]</scope>
</reference>
<reference key="4">
    <citation type="submission" date="1999-10" db="EMBL/GenBank/DDBJ databases">
        <title>Mammalian homologs of Xenopus nocturnin: conservation of structure and circadian regulation.</title>
        <authorList>
            <person name="Wang Y."/>
            <person name="Osterbur D.L."/>
            <person name="Green C.B."/>
            <person name="Besharse J.C."/>
        </authorList>
    </citation>
    <scope>NUCLEOTIDE SEQUENCE [GENOMIC DNA / MRNA] OF 67-431</scope>
</reference>
<reference key="5">
    <citation type="journal article" date="2012" name="Obesity">
        <title>The role of nocturnin in early adipogenesis and modulation of systemic insulin resistance in human.</title>
        <authorList>
            <person name="Hee S.W."/>
            <person name="Tsai S.H."/>
            <person name="Chang Y.C."/>
            <person name="Chang C.J."/>
            <person name="Yu I.S."/>
            <person name="Lee P.C."/>
            <person name="Lee W.J."/>
            <person name="Yun-Chia Chang E."/>
            <person name="Chuang L.M."/>
        </authorList>
    </citation>
    <scope>TISSUE SPECIFICITY</scope>
</reference>
<reference key="6">
    <citation type="journal article" date="2012" name="Trends Endocrinol. Metab.">
        <title>Nocturnin: at the crossroads of clocks and metabolism.</title>
        <authorList>
            <person name="Stubblefield J.J."/>
            <person name="Terrien J."/>
            <person name="Green C.B."/>
        </authorList>
    </citation>
    <scope>REVIEW</scope>
</reference>
<reference evidence="10 11" key="7">
    <citation type="journal article" date="2018" name="Nucleic Acids Res.">
        <title>The structure of human Nocturnin reveals a conserved ribonuclease domain that represses target transcript translation and abundance in cells.</title>
        <authorList>
            <person name="Abshire E.T."/>
            <person name="Chasseur J."/>
            <person name="Bohn J.A."/>
            <person name="Del Rizzo P.A."/>
            <person name="Freddolino P.L."/>
            <person name="Goldstrohm A.C."/>
            <person name="Trievel R.C."/>
        </authorList>
    </citation>
    <scope>X-RAY CRYSTALLOGRAPHY (1.48 ANGSTROMS) OF 120-431 IN COMPLEX WITH MAGNESIUM</scope>
    <scope>FUNCTION</scope>
    <scope>COFACTOR</scope>
    <scope>LACK OF ADENYLASE ACTIVITY</scope>
    <scope>MUTAGENESIS OF ASN-149; GLU-195; HIS-286; ASP-324; ASN-326; ASP-377 AND HIS-414</scope>
</reference>
<reference evidence="12" key="8">
    <citation type="journal article" date="2018" name="Sci. Rep.">
        <title>Crystal Structure of Human Nocturnin Catalytic Domain.</title>
        <authorList>
            <person name="Estrella M.A."/>
            <person name="Du J."/>
            <person name="Korennykh A."/>
        </authorList>
    </citation>
    <scope>X-RAY CRYSTALLOGRAPHY (2.60 ANGSTROMS) OF 122-431 IN COMPLEX WITH MAGNESIUM</scope>
    <scope>LACK OF ADENYLASE ACTIVITY</scope>
</reference>
<reference key="9">
    <citation type="journal article" date="2019" name="Nat. Commun.">
        <title>The metabolites NADP+ and NADPH are the targets of the circadian protein Nocturnin (Curled).</title>
        <authorList>
            <person name="Estrella M.A."/>
            <person name="Du J."/>
            <person name="Chen L."/>
            <person name="Rath S."/>
            <person name="Prangley E."/>
            <person name="Chitrakar A."/>
            <person name="Aoki T."/>
            <person name="Schedl P."/>
            <person name="Rabinowitz J."/>
            <person name="Korennykh A."/>
        </authorList>
    </citation>
    <scope>X-RAY CRYSTALLOGRAPHY (2.70 ANGSTROMS) OF 122-431 IN COMPLEX WITH METAL AND NADPH</scope>
    <scope>FUNCTION</scope>
    <scope>SUBCELLULAR LOCATION</scope>
    <scope>BIOPHYSICOCHEMICAL PROPERTIES</scope>
    <scope>MUTAGENESIS OF ASP-160; GLU-195; LYS-219; HIS-286; LYS-288; ARG-290; LYS-365 AND ARG-367</scope>
</reference>
<accession>Q9UK39</accession>
<accession>D3DNY5</accession>
<accession>Q14D51</accession>
<accession>Q9HD93</accession>
<accession>Q9HD94</accession>
<accession>Q9HD95</accession>
<organism>
    <name type="scientific">Homo sapiens</name>
    <name type="common">Human</name>
    <dbReference type="NCBI Taxonomy" id="9606"/>
    <lineage>
        <taxon>Eukaryota</taxon>
        <taxon>Metazoa</taxon>
        <taxon>Chordata</taxon>
        <taxon>Craniata</taxon>
        <taxon>Vertebrata</taxon>
        <taxon>Euteleostomi</taxon>
        <taxon>Mammalia</taxon>
        <taxon>Eutheria</taxon>
        <taxon>Euarchontoglires</taxon>
        <taxon>Primates</taxon>
        <taxon>Haplorrhini</taxon>
        <taxon>Catarrhini</taxon>
        <taxon>Hominidae</taxon>
        <taxon>Homo</taxon>
    </lineage>
</organism>
<protein>
    <recommendedName>
        <fullName evidence="9">Nocturnin</fullName>
        <ecNumber evidence="7">3.1.3.108</ecNumber>
    </recommendedName>
    <alternativeName>
        <fullName>Carbon catabolite repression 4-like protein</fullName>
    </alternativeName>
</protein>